<accession>P11953</accession>
<protein>
    <recommendedName>
        <fullName>Relaxin</fullName>
    </recommendedName>
    <component>
        <recommendedName>
            <fullName>Relaxin B chain</fullName>
        </recommendedName>
    </component>
    <component>
        <recommendedName>
            <fullName>Relaxin A chain</fullName>
        </recommendedName>
    </component>
</protein>
<keyword id="KW-0903">Direct protein sequencing</keyword>
<keyword id="KW-1015">Disulfide bond</keyword>
<keyword id="KW-0372">Hormone</keyword>
<keyword id="KW-0873">Pyrrolidone carboxylic acid</keyword>
<keyword id="KW-0964">Secreted</keyword>
<comment type="function">
    <text>The function of relaxin in an oviparous species is not yet known.</text>
</comment>
<comment type="subunit">
    <text>Heterodimer of a B chain and an A chain linked by two disulfide bonds.</text>
</comment>
<comment type="subcellular location">
    <subcellularLocation>
        <location>Secreted</location>
    </subcellularLocation>
</comment>
<comment type="similarity">
    <text evidence="2">Belongs to the insulin family.</text>
</comment>
<reference key="1">
    <citation type="journal article" date="1986" name="Eur. J. Biochem.">
        <title>Isolation, purification, and the sequence of relaxin from spiny dogfish (Squalus acanthias).</title>
        <authorList>
            <person name="Bullesbach E.E."/>
            <person name="Gowan L.K."/>
            <person name="Schwabe C."/>
            <person name="Steinetz B.G."/>
            <person name="O'Byrne E."/>
            <person name="Callard I.P."/>
        </authorList>
    </citation>
    <scope>PROTEIN SEQUENCE</scope>
    <scope>PYROGLUTAMATE FORMATION AT GLN-1</scope>
    <source>
        <tissue>Ovary</tissue>
    </source>
</reference>
<dbReference type="PIR" id="B26463">
    <property type="entry name" value="A26463"/>
</dbReference>
<dbReference type="SMR" id="P11953"/>
<dbReference type="GO" id="GO:0005576">
    <property type="term" value="C:extracellular region"/>
    <property type="evidence" value="ECO:0007669"/>
    <property type="project" value="UniProtKB-SubCell"/>
</dbReference>
<dbReference type="GO" id="GO:0001664">
    <property type="term" value="F:G protein-coupled receptor binding"/>
    <property type="evidence" value="ECO:0007669"/>
    <property type="project" value="TreeGrafter"/>
</dbReference>
<dbReference type="GO" id="GO:0005179">
    <property type="term" value="F:hormone activity"/>
    <property type="evidence" value="ECO:0007669"/>
    <property type="project" value="UniProtKB-KW"/>
</dbReference>
<dbReference type="CDD" id="cd04365">
    <property type="entry name" value="IlGF_relaxin_like"/>
    <property type="match status" value="1"/>
</dbReference>
<dbReference type="Gene3D" id="1.10.100.10">
    <property type="entry name" value="Insulin-like"/>
    <property type="match status" value="1"/>
</dbReference>
<dbReference type="InterPro" id="IPR016179">
    <property type="entry name" value="Insulin-like"/>
</dbReference>
<dbReference type="InterPro" id="IPR051777">
    <property type="entry name" value="Insulin-like_neuro_ligands"/>
</dbReference>
<dbReference type="InterPro" id="IPR036438">
    <property type="entry name" value="Insulin-like_sf"/>
</dbReference>
<dbReference type="InterPro" id="IPR022353">
    <property type="entry name" value="Insulin_CS"/>
</dbReference>
<dbReference type="InterPro" id="IPR022352">
    <property type="entry name" value="Insulin_family"/>
</dbReference>
<dbReference type="InterPro" id="IPR003235">
    <property type="entry name" value="Nem_insulin-like_b-type"/>
</dbReference>
<dbReference type="PANTHER" id="PTHR20968">
    <property type="entry name" value="ILGF DOMAIN-CONTAINING PROTEIN"/>
    <property type="match status" value="1"/>
</dbReference>
<dbReference type="Pfam" id="PF03488">
    <property type="entry name" value="Ins_beta"/>
    <property type="match status" value="1"/>
</dbReference>
<dbReference type="PRINTS" id="PR00276">
    <property type="entry name" value="INSULINFAMLY"/>
</dbReference>
<dbReference type="SMART" id="SM00078">
    <property type="entry name" value="IlGF"/>
    <property type="match status" value="1"/>
</dbReference>
<dbReference type="SUPFAM" id="SSF56994">
    <property type="entry name" value="Insulin-like"/>
    <property type="match status" value="1"/>
</dbReference>
<dbReference type="PROSITE" id="PS00262">
    <property type="entry name" value="INSULIN"/>
    <property type="match status" value="1"/>
</dbReference>
<sequence>QSFKNAEPGIKLCGREFIRAVIYTCGGSRWEGSPGMSSKCCTYGCTRKDISILC</sequence>
<proteinExistence type="evidence at protein level"/>
<feature type="peptide" id="PRO_0000016125" description="Relaxin B chain">
    <location>
        <begin position="1"/>
        <end position="30"/>
    </location>
</feature>
<feature type="peptide" id="PRO_0000016126" description="Relaxin A chain">
    <location>
        <begin position="31"/>
        <end position="54"/>
    </location>
</feature>
<feature type="modified residue" description="Pyrrolidone carboxylic acid" evidence="1">
    <location>
        <position position="1"/>
    </location>
</feature>
<feature type="disulfide bond" description="Interchain (between B and A chains)">
    <location>
        <begin position="13"/>
        <end position="41"/>
    </location>
</feature>
<feature type="disulfide bond" description="Interchain (between B and A chains)">
    <location>
        <begin position="25"/>
        <end position="54"/>
    </location>
</feature>
<feature type="disulfide bond">
    <location>
        <begin position="40"/>
        <end position="45"/>
    </location>
</feature>
<feature type="non-consecutive residues" evidence="2">
    <location>
        <begin position="30"/>
        <end position="31"/>
    </location>
</feature>
<name>RELX_SQUAC</name>
<evidence type="ECO:0000269" key="1">
    <source>
    </source>
</evidence>
<evidence type="ECO:0000305" key="2"/>
<organism>
    <name type="scientific">Squalus acanthias</name>
    <name type="common">Spiny dogfish</name>
    <dbReference type="NCBI Taxonomy" id="7797"/>
    <lineage>
        <taxon>Eukaryota</taxon>
        <taxon>Metazoa</taxon>
        <taxon>Chordata</taxon>
        <taxon>Craniata</taxon>
        <taxon>Vertebrata</taxon>
        <taxon>Chondrichthyes</taxon>
        <taxon>Elasmobranchii</taxon>
        <taxon>Squalomorphii</taxon>
        <taxon>Squaliformes</taxon>
        <taxon>Squalidae</taxon>
        <taxon>Squalus</taxon>
    </lineage>
</organism>